<name>ERIE_HERER</name>
<protein>
    <recommendedName>
        <fullName evidence="4">Geranylgeranyl pyrophosphate synthase AN1592</fullName>
        <shortName evidence="5">GGPP synthase</shortName>
        <shortName evidence="5">GGPPSase</shortName>
        <ecNumber evidence="6">2.5.1.-</ecNumber>
    </recommendedName>
    <alternativeName>
        <fullName evidence="1">(2E,6E)-farnesyl diphosphate synthase</fullName>
    </alternativeName>
    <alternativeName>
        <fullName evidence="1">Dimethylallyltranstransferase</fullName>
        <ecNumber evidence="1">2.5.1.1</ecNumber>
    </alternativeName>
    <alternativeName>
        <fullName evidence="4">Erinacine biosynthesis cluster protein E</fullName>
    </alternativeName>
    <alternativeName>
        <fullName evidence="1">Farnesyl diphosphate synthase</fullName>
    </alternativeName>
    <alternativeName>
        <fullName evidence="1">Farnesyltranstransferase</fullName>
        <ecNumber evidence="1">2.5.1.29</ecNumber>
    </alternativeName>
    <alternativeName>
        <fullName evidence="1">Geranylgeranyl diphosphate synthase</fullName>
    </alternativeName>
    <alternativeName>
        <fullName evidence="1">Geranyltranstransferase</fullName>
        <ecNumber evidence="1">2.5.1.10</ecNumber>
    </alternativeName>
</protein>
<accession>A0A1V0QSA8</accession>
<reference key="1">
    <citation type="journal article" date="2017" name="Angew. Chem. Int. Ed.">
        <title>Discovery and characterization of a new family of diterpene cyclases in bacteria and fungi.</title>
        <authorList>
            <person name="Yang Y.L."/>
            <person name="Zhang S."/>
            <person name="Ma K."/>
            <person name="Xu Y."/>
            <person name="Tao Q."/>
            <person name="Chen Y."/>
            <person name="Chen J."/>
            <person name="Guo S."/>
            <person name="Ren J."/>
            <person name="Wang W."/>
            <person name="Tao Y."/>
            <person name="Yin W.B."/>
            <person name="Liu H."/>
        </authorList>
    </citation>
    <scope>NUCLEOTIDE SEQUENCE [MRNA]</scope>
    <scope>FUNCTION</scope>
    <scope>PATHWAY</scope>
</reference>
<reference key="2">
    <citation type="journal article" date="2019" name="J. Am. Chem. Soc.">
        <title>Efficient reconstitution of basidiomycota diterpene erinacine gene cluster in ascomycota host Aspergillus oryzae based on genomic DNA sequences.</title>
        <authorList>
            <person name="Liu C."/>
            <person name="Minami A."/>
            <person name="Ozaki T."/>
            <person name="Wu J."/>
            <person name="Kawagishi H."/>
            <person name="Maruyama J.I."/>
            <person name="Oikawa H."/>
        </authorList>
    </citation>
    <scope>FUNCTION</scope>
    <scope>PATHWAY</scope>
</reference>
<feature type="chain" id="PRO_0000452924" description="Geranylgeranyl pyrophosphate synthase AN1592">
    <location>
        <begin position="1"/>
        <end position="339"/>
    </location>
</feature>
<feature type="binding site" evidence="1">
    <location>
        <position position="41"/>
    </location>
    <ligand>
        <name>isopentenyl diphosphate</name>
        <dbReference type="ChEBI" id="CHEBI:128769"/>
    </ligand>
</feature>
<feature type="binding site" evidence="1">
    <location>
        <position position="44"/>
    </location>
    <ligand>
        <name>isopentenyl diphosphate</name>
        <dbReference type="ChEBI" id="CHEBI:128769"/>
    </ligand>
</feature>
<feature type="binding site" evidence="1">
    <location>
        <position position="73"/>
    </location>
    <ligand>
        <name>isopentenyl diphosphate</name>
        <dbReference type="ChEBI" id="CHEBI:128769"/>
    </ligand>
</feature>
<feature type="binding site" evidence="1">
    <location>
        <position position="80"/>
    </location>
    <ligand>
        <name>Mg(2+)</name>
        <dbReference type="ChEBI" id="CHEBI:18420"/>
        <label>1</label>
    </ligand>
</feature>
<feature type="binding site" evidence="1">
    <location>
        <position position="80"/>
    </location>
    <ligand>
        <name>Mg(2+)</name>
        <dbReference type="ChEBI" id="CHEBI:18420"/>
        <label>2</label>
    </ligand>
</feature>
<feature type="binding site" evidence="1">
    <location>
        <position position="84"/>
    </location>
    <ligand>
        <name>Mg(2+)</name>
        <dbReference type="ChEBI" id="CHEBI:18420"/>
        <label>1</label>
    </ligand>
</feature>
<feature type="binding site" evidence="1">
    <location>
        <position position="84"/>
    </location>
    <ligand>
        <name>Mg(2+)</name>
        <dbReference type="ChEBI" id="CHEBI:18420"/>
        <label>2</label>
    </ligand>
</feature>
<feature type="binding site" evidence="1">
    <location>
        <position position="89"/>
    </location>
    <ligand>
        <name>dimethylallyl diphosphate</name>
        <dbReference type="ChEBI" id="CHEBI:57623"/>
    </ligand>
</feature>
<feature type="binding site" evidence="1">
    <location>
        <position position="90"/>
    </location>
    <ligand>
        <name>isopentenyl diphosphate</name>
        <dbReference type="ChEBI" id="CHEBI:128769"/>
    </ligand>
</feature>
<feature type="binding site" evidence="1">
    <location>
        <position position="192"/>
    </location>
    <ligand>
        <name>dimethylallyl diphosphate</name>
        <dbReference type="ChEBI" id="CHEBI:57623"/>
    </ligand>
</feature>
<feature type="binding site" evidence="1">
    <location>
        <position position="193"/>
    </location>
    <ligand>
        <name>dimethylallyl diphosphate</name>
        <dbReference type="ChEBI" id="CHEBI:57623"/>
    </ligand>
</feature>
<feature type="binding site" evidence="1">
    <location>
        <position position="228"/>
    </location>
    <ligand>
        <name>dimethylallyl diphosphate</name>
        <dbReference type="ChEBI" id="CHEBI:57623"/>
    </ligand>
</feature>
<feature type="binding site" evidence="1">
    <location>
        <position position="231"/>
    </location>
    <ligand>
        <name>Mg(2+)</name>
        <dbReference type="ChEBI" id="CHEBI:18420"/>
        <label>3</label>
    </ligand>
</feature>
<feature type="binding site" evidence="1">
    <location>
        <position position="235"/>
    </location>
    <ligand>
        <name>dimethylallyl diphosphate</name>
        <dbReference type="ChEBI" id="CHEBI:57623"/>
    </ligand>
</feature>
<feature type="binding site" evidence="1">
    <location>
        <position position="245"/>
    </location>
    <ligand>
        <name>dimethylallyl diphosphate</name>
        <dbReference type="ChEBI" id="CHEBI:57623"/>
    </ligand>
</feature>
<feature type="binding site" evidence="1">
    <location>
        <position position="255"/>
    </location>
    <ligand>
        <name>dimethylallyl diphosphate</name>
        <dbReference type="ChEBI" id="CHEBI:57623"/>
    </ligand>
</feature>
<feature type="site" description="Important for determining product chain length" evidence="1">
    <location>
        <position position="112"/>
    </location>
</feature>
<keyword id="KW-0414">Isoprene biosynthesis</keyword>
<keyword id="KW-0460">Magnesium</keyword>
<keyword id="KW-0479">Metal-binding</keyword>
<keyword id="KW-0808">Transferase</keyword>
<organism>
    <name type="scientific">Hericium erinaceus</name>
    <name type="common">Lion's mane mushroom</name>
    <name type="synonym">Hydnum erinaceus</name>
    <dbReference type="NCBI Taxonomy" id="91752"/>
    <lineage>
        <taxon>Eukaryota</taxon>
        <taxon>Fungi</taxon>
        <taxon>Dikarya</taxon>
        <taxon>Basidiomycota</taxon>
        <taxon>Agaricomycotina</taxon>
        <taxon>Agaricomycetes</taxon>
        <taxon>Russulales</taxon>
        <taxon>Hericiaceae</taxon>
        <taxon>Hericium</taxon>
    </lineage>
</organism>
<proteinExistence type="evidence at transcript level"/>
<dbReference type="EC" id="2.5.1.-" evidence="6"/>
<dbReference type="EC" id="2.5.1.1" evidence="1"/>
<dbReference type="EC" id="2.5.1.29" evidence="1"/>
<dbReference type="EC" id="2.5.1.10" evidence="1"/>
<dbReference type="EMBL" id="KY683780">
    <property type="protein sequence ID" value="ARE72242.1"/>
    <property type="molecule type" value="mRNA"/>
</dbReference>
<dbReference type="SMR" id="A0A1V0QSA8"/>
<dbReference type="GO" id="GO:0004337">
    <property type="term" value="F:(2E,6E)-farnesyl diphosphate synthase activity"/>
    <property type="evidence" value="ECO:0007669"/>
    <property type="project" value="UniProtKB-EC"/>
</dbReference>
<dbReference type="GO" id="GO:0004161">
    <property type="term" value="F:dimethylallyltranstransferase activity"/>
    <property type="evidence" value="ECO:0007669"/>
    <property type="project" value="UniProtKB-EC"/>
</dbReference>
<dbReference type="GO" id="GO:0004311">
    <property type="term" value="F:geranylgeranyl diphosphate synthase activity"/>
    <property type="evidence" value="ECO:0007669"/>
    <property type="project" value="UniProtKB-EC"/>
</dbReference>
<dbReference type="GO" id="GO:0046872">
    <property type="term" value="F:metal ion binding"/>
    <property type="evidence" value="ECO:0007669"/>
    <property type="project" value="UniProtKB-KW"/>
</dbReference>
<dbReference type="GO" id="GO:0008299">
    <property type="term" value="P:isoprenoid biosynthetic process"/>
    <property type="evidence" value="ECO:0007669"/>
    <property type="project" value="UniProtKB-KW"/>
</dbReference>
<dbReference type="CDD" id="cd00685">
    <property type="entry name" value="Trans_IPPS_HT"/>
    <property type="match status" value="1"/>
</dbReference>
<dbReference type="Gene3D" id="1.10.600.10">
    <property type="entry name" value="Farnesyl Diphosphate Synthase"/>
    <property type="match status" value="1"/>
</dbReference>
<dbReference type="InterPro" id="IPR008949">
    <property type="entry name" value="Isoprenoid_synthase_dom_sf"/>
</dbReference>
<dbReference type="InterPro" id="IPR000092">
    <property type="entry name" value="Polyprenyl_synt"/>
</dbReference>
<dbReference type="InterPro" id="IPR033749">
    <property type="entry name" value="Polyprenyl_synt_CS"/>
</dbReference>
<dbReference type="PANTHER" id="PTHR12001">
    <property type="entry name" value="GERANYLGERANYL PYROPHOSPHATE SYNTHASE"/>
    <property type="match status" value="1"/>
</dbReference>
<dbReference type="PANTHER" id="PTHR12001:SF44">
    <property type="entry name" value="GERANYLGERANYL PYROPHOSPHATE SYNTHASE"/>
    <property type="match status" value="1"/>
</dbReference>
<dbReference type="Pfam" id="PF00348">
    <property type="entry name" value="polyprenyl_synt"/>
    <property type="match status" value="1"/>
</dbReference>
<dbReference type="SFLD" id="SFLDS00005">
    <property type="entry name" value="Isoprenoid_Synthase_Type_I"/>
    <property type="match status" value="1"/>
</dbReference>
<dbReference type="SUPFAM" id="SSF48576">
    <property type="entry name" value="Terpenoid synthases"/>
    <property type="match status" value="1"/>
</dbReference>
<dbReference type="PROSITE" id="PS00723">
    <property type="entry name" value="POLYPRENYL_SYNTHASE_1"/>
    <property type="match status" value="1"/>
</dbReference>
<dbReference type="PROSITE" id="PS00444">
    <property type="entry name" value="POLYPRENYL_SYNTHASE_2"/>
    <property type="match status" value="1"/>
</dbReference>
<gene>
    <name evidence="4" type="primary">eriE</name>
</gene>
<sequence>MSAPINGTVEKSYVPGAELWCQEDETAITEPYTYVNSMPGKDVRGRFIEAANHWLHVEPEPLAVICKIVAMLHNASLVIDDIEDNSQLRRGQPVAHKIYGLAQAINSANYVYFLALKEADQLKPYQREGYNSHEIILGALTSVSDFAAQDLLYSVFSDELVNLHRGQGLELVWRDSLRCPTEEQYIDMVNKKTGGLFRLAIKLLTACSSNPSTIDYVPLFNLFGVFFQIRDDLMNLDDNEYEKNKGFAEDLTEGKFSFPVIHGITAQKDNSVLINVLQKRPTTPPLKLHAIHHLRNNTGSFKYTETILNSLETRLRGEIDALGGNPGLLKLVDLLSVRK</sequence>
<comment type="function">
    <text evidence="1 2 3 6">Geranylgeranyl pyrophosphate synthase; part of the gene cluster that mediates the biosynthesis of erinacines, cyathane-xylosides that show unique biological activities, including leishmanicidal activity, stimulating activity for nerve growth-factor synthesis, and agonistic activity toward the kappa opioid receptor (PubMed:28371074, PubMed:31535864). The geranylgeranyl diphosphate (GGPP) synthase eriE catalyzes the first step in erinacines biosynthesis via conversion of farnesyl pyrophosphate and isopentyl pyrophosphate into geranylgeranyl pyrophosphate (GGPP) (By similarity). GGPP is then substrate of the diterpene cyclase eriG for the production of cyatha-3,12-diene. The cytochrome P450 monooxygenase eriI then hydroxylates cyatha-3,12-diene at C-14 of the seven-membered ring to produce erinacol, which is further hydroxylated at C-15 by the cytochrome P450 monooxygenase eriC to yield cyathadiol. The cytochrome P450 monooxygenase eriA then catalyzes C-11 hydroxylation in the presence of the short chain dehydrogenase/reductase (SDR) eriH, which leads to the production of cyathatriol. The acetyltransferase eriL converts cyathatriol into 11-O-acetyl-cyathatriol. The SDR eriH catalyzes further oxidation of 11-O-acetyl-cyathatriol into 1-O-acetylcyathin A3. Finally, the glycosyl transferase eriJ tranfers xylose from UDP-xylose onto C-14 of 11-O-acetyl-cyathatriol to form eracine Q. EriJ is also able to convert 11-O-acetyl-cyathatriol to eracine Q2 by using UDP-D-glucose as cosubstrate, but at a lower rate. In the absence of eriL and eriJ, the SDR eriH is able to convert cyathatriol to cyathin A3; this is likely a switching mechanism in the biosynthesis of cyathins (C-14 ketogroup)and erinacines (C-14 glycosylated group). The roles of the SDR eriB, the polyprenyl transferase eriF and the dehydrogenase eriK have still to be identified (Probable).</text>
</comment>
<comment type="catalytic activity">
    <reaction evidence="1">
        <text>isopentenyl diphosphate + dimethylallyl diphosphate = (2E)-geranyl diphosphate + diphosphate</text>
        <dbReference type="Rhea" id="RHEA:22408"/>
        <dbReference type="ChEBI" id="CHEBI:33019"/>
        <dbReference type="ChEBI" id="CHEBI:57623"/>
        <dbReference type="ChEBI" id="CHEBI:58057"/>
        <dbReference type="ChEBI" id="CHEBI:128769"/>
        <dbReference type="EC" id="2.5.1.1"/>
    </reaction>
</comment>
<comment type="catalytic activity">
    <reaction evidence="1">
        <text>isopentenyl diphosphate + (2E)-geranyl diphosphate = (2E,6E)-farnesyl diphosphate + diphosphate</text>
        <dbReference type="Rhea" id="RHEA:19361"/>
        <dbReference type="ChEBI" id="CHEBI:33019"/>
        <dbReference type="ChEBI" id="CHEBI:58057"/>
        <dbReference type="ChEBI" id="CHEBI:128769"/>
        <dbReference type="ChEBI" id="CHEBI:175763"/>
        <dbReference type="EC" id="2.5.1.10"/>
    </reaction>
</comment>
<comment type="catalytic activity">
    <reaction evidence="1">
        <text>isopentenyl diphosphate + (2E,6E)-farnesyl diphosphate = (2E,6E,10E)-geranylgeranyl diphosphate + diphosphate</text>
        <dbReference type="Rhea" id="RHEA:17653"/>
        <dbReference type="ChEBI" id="CHEBI:33019"/>
        <dbReference type="ChEBI" id="CHEBI:58756"/>
        <dbReference type="ChEBI" id="CHEBI:128769"/>
        <dbReference type="ChEBI" id="CHEBI:175763"/>
        <dbReference type="EC" id="2.5.1.29"/>
    </reaction>
</comment>
<comment type="cofactor">
    <cofactor evidence="1">
        <name>Mg(2+)</name>
        <dbReference type="ChEBI" id="CHEBI:18420"/>
    </cofactor>
    <text evidence="1">Binds 3 Mg(2+) ions per subunit.</text>
</comment>
<comment type="pathway">
    <text evidence="3">Secondary metabolite biosynthesis.</text>
</comment>
<comment type="similarity">
    <text evidence="5">Belongs to the FPP/GGPP synthase family.</text>
</comment>
<evidence type="ECO:0000250" key="1">
    <source>
        <dbReference type="UniProtKB" id="Q12051"/>
    </source>
</evidence>
<evidence type="ECO:0000269" key="2">
    <source>
    </source>
</evidence>
<evidence type="ECO:0000269" key="3">
    <source>
    </source>
</evidence>
<evidence type="ECO:0000303" key="4">
    <source>
    </source>
</evidence>
<evidence type="ECO:0000305" key="5"/>
<evidence type="ECO:0000305" key="6">
    <source>
    </source>
</evidence>